<organism>
    <name type="scientific">Arabidopsis thaliana</name>
    <name type="common">Mouse-ear cress</name>
    <dbReference type="NCBI Taxonomy" id="3702"/>
    <lineage>
        <taxon>Eukaryota</taxon>
        <taxon>Viridiplantae</taxon>
        <taxon>Streptophyta</taxon>
        <taxon>Embryophyta</taxon>
        <taxon>Tracheophyta</taxon>
        <taxon>Spermatophyta</taxon>
        <taxon>Magnoliopsida</taxon>
        <taxon>eudicotyledons</taxon>
        <taxon>Gunneridae</taxon>
        <taxon>Pentapetalae</taxon>
        <taxon>rosids</taxon>
        <taxon>malvids</taxon>
        <taxon>Brassicales</taxon>
        <taxon>Brassicaceae</taxon>
        <taxon>Camelineae</taxon>
        <taxon>Arabidopsis</taxon>
    </lineage>
</organism>
<dbReference type="EMBL" id="AC025808">
    <property type="protein sequence ID" value="AAF79432.1"/>
    <property type="status" value="ALT_SEQ"/>
    <property type="molecule type" value="Genomic_DNA"/>
</dbReference>
<dbReference type="EMBL" id="CP002684">
    <property type="protein sequence ID" value="AEE29864.1"/>
    <property type="molecule type" value="Genomic_DNA"/>
</dbReference>
<dbReference type="EMBL" id="AY085135">
    <property type="protein sequence ID" value="AAM61688.1"/>
    <property type="molecule type" value="mRNA"/>
</dbReference>
<dbReference type="EMBL" id="BT025250">
    <property type="protein sequence ID" value="ABF19003.1"/>
    <property type="molecule type" value="mRNA"/>
</dbReference>
<dbReference type="PIR" id="A86328">
    <property type="entry name" value="A86328"/>
</dbReference>
<dbReference type="RefSeq" id="NP_001185038.1">
    <molecule id="Q8LEZ4-1"/>
    <property type="nucleotide sequence ID" value="NM_001198109.2"/>
</dbReference>
<dbReference type="SMR" id="Q8LEZ4"/>
<dbReference type="BioGRID" id="23777">
    <property type="interactions" value="7"/>
</dbReference>
<dbReference type="FunCoup" id="Q8LEZ4">
    <property type="interactions" value="835"/>
</dbReference>
<dbReference type="IntAct" id="Q8LEZ4">
    <property type="interactions" value="1"/>
</dbReference>
<dbReference type="STRING" id="3702.Q8LEZ4"/>
<dbReference type="PaxDb" id="3702-AT1G19520.1"/>
<dbReference type="ProteomicsDB" id="236822">
    <molecule id="Q8LEZ4-1"/>
</dbReference>
<dbReference type="EnsemblPlants" id="AT1G19520.2">
    <molecule id="Q8LEZ4-1"/>
    <property type="protein sequence ID" value="AT1G19520.2"/>
    <property type="gene ID" value="AT1G19520"/>
</dbReference>
<dbReference type="GeneID" id="838538"/>
<dbReference type="Gramene" id="AT1G19520.2">
    <molecule id="Q8LEZ4-1"/>
    <property type="protein sequence ID" value="AT1G19520.2"/>
    <property type="gene ID" value="AT1G19520"/>
</dbReference>
<dbReference type="KEGG" id="ath:AT1G19520"/>
<dbReference type="Araport" id="AT1G19520"/>
<dbReference type="TAIR" id="AT1G19520">
    <property type="gene designation" value="NFD5"/>
</dbReference>
<dbReference type="eggNOG" id="KOG4197">
    <property type="taxonomic scope" value="Eukaryota"/>
</dbReference>
<dbReference type="HOGENOM" id="CLU_757318_0_0_1"/>
<dbReference type="InParanoid" id="Q8LEZ4"/>
<dbReference type="PhylomeDB" id="Q8LEZ4"/>
<dbReference type="PRO" id="PR:Q8LEZ4"/>
<dbReference type="Proteomes" id="UP000006548">
    <property type="component" value="Chromosome 1"/>
</dbReference>
<dbReference type="ExpressionAtlas" id="Q8LEZ4">
    <property type="expression patterns" value="baseline and differential"/>
</dbReference>
<dbReference type="GO" id="GO:0005739">
    <property type="term" value="C:mitochondrion"/>
    <property type="evidence" value="ECO:0007669"/>
    <property type="project" value="UniProtKB-SubCell"/>
</dbReference>
<dbReference type="GO" id="GO:1990904">
    <property type="term" value="C:ribonucleoprotein complex"/>
    <property type="evidence" value="ECO:0007669"/>
    <property type="project" value="UniProtKB-KW"/>
</dbReference>
<dbReference type="GO" id="GO:0005840">
    <property type="term" value="C:ribosome"/>
    <property type="evidence" value="ECO:0007669"/>
    <property type="project" value="UniProtKB-KW"/>
</dbReference>
<dbReference type="GO" id="GO:0000741">
    <property type="term" value="P:karyogamy"/>
    <property type="evidence" value="ECO:0000315"/>
    <property type="project" value="UniProtKB"/>
</dbReference>
<dbReference type="GO" id="GO:0010197">
    <property type="term" value="P:polar nucleus fusion"/>
    <property type="evidence" value="ECO:0000315"/>
    <property type="project" value="UniProtKB"/>
</dbReference>
<dbReference type="PANTHER" id="PTHR46862:SF2">
    <property type="entry name" value="OS02G0611400 PROTEIN"/>
    <property type="match status" value="1"/>
</dbReference>
<dbReference type="PANTHER" id="PTHR46862">
    <property type="entry name" value="OS07G0661900 PROTEIN"/>
    <property type="match status" value="1"/>
</dbReference>
<sequence length="372" mass="43110">MKSFLLSRQAIHRISLLSSKTPTFCRNFSAITSTISHSDRHLRSYDEQTPFQNVEIPRPISSFNRYFHFTRESRLSESSAAIDDSNDQEEDDEDGTTNEFLSRFVWIMRGKVSEAYPDCDKKMIDGMLLLIVEKVVEEIERGGFNKVGSAPPSPSSEFSDDLWATIWEVSNTVLKDMEKERKKEKMKQYVQSPEVMEMCRFAGEIGIRGDLLRELRFKWAREKMDDAEFYESLEQQRDLDNSIRESETVDGEVEEEGFVPSDEVESRSISLPKRKGKLKYKIYGLELSDPKWVEMADKIHEAEEEADWREPKPVTGKCKLVMEKLESLQEGDDPSGLLAEWAELLEPNRVDWIALINQLREGNTHAYLKVRL</sequence>
<feature type="transit peptide" description="Mitochondrion" evidence="1">
    <location>
        <begin position="1"/>
        <end position="28"/>
    </location>
</feature>
<feature type="chain" id="PRO_0000342699" description="Small ribosomal subunit protein mS77 (rPPR2)">
    <location>
        <begin position="29"/>
        <end position="372"/>
    </location>
</feature>
<feature type="region of interest" description="Disordered" evidence="2">
    <location>
        <begin position="240"/>
        <end position="265"/>
    </location>
</feature>
<feature type="compositionally biased region" description="Acidic residues" evidence="2">
    <location>
        <begin position="248"/>
        <end position="257"/>
    </location>
</feature>
<comment type="function">
    <text evidence="3">Required for karyogamy during female gametophyte development, when the two polar nuclei fuse to form the diploid central cell nucleus.</text>
</comment>
<comment type="subunit">
    <text evidence="6">Component of the mitochondrial ribosome small subunit.</text>
</comment>
<comment type="subcellular location">
    <subcellularLocation>
        <location evidence="5 6">Mitochondrion</location>
    </subcellularLocation>
</comment>
<comment type="alternative products">
    <event type="alternative splicing"/>
    <isoform>
        <id>Q8LEZ4-1</id>
        <name>1</name>
        <sequence type="displayed"/>
    </isoform>
    <text>A number of isoforms are produced. According to EST sequences.</text>
</comment>
<comment type="disruption phenotype">
    <text evidence="3">Failure of fusion of the polar nuclei during megagametogenesis.</text>
</comment>
<comment type="sequence caution" evidence="6">
    <conflict type="erroneous gene model prediction">
        <sequence resource="EMBL-CDS" id="AAF79432"/>
    </conflict>
    <text>The predicted gene has been split into 2 genes: At1g19520 and At1g19525.</text>
</comment>
<name>NFD5_ARATH</name>
<accession>Q8LEZ4</accession>
<accession>Q9LN43</accession>
<reference key="1">
    <citation type="journal article" date="2000" name="Nature">
        <title>Sequence and analysis of chromosome 1 of the plant Arabidopsis thaliana.</title>
        <authorList>
            <person name="Theologis A."/>
            <person name="Ecker J.R."/>
            <person name="Palm C.J."/>
            <person name="Federspiel N.A."/>
            <person name="Kaul S."/>
            <person name="White O."/>
            <person name="Alonso J."/>
            <person name="Altafi H."/>
            <person name="Araujo R."/>
            <person name="Bowman C.L."/>
            <person name="Brooks S.Y."/>
            <person name="Buehler E."/>
            <person name="Chan A."/>
            <person name="Chao Q."/>
            <person name="Chen H."/>
            <person name="Cheuk R.F."/>
            <person name="Chin C.W."/>
            <person name="Chung M.K."/>
            <person name="Conn L."/>
            <person name="Conway A.B."/>
            <person name="Conway A.R."/>
            <person name="Creasy T.H."/>
            <person name="Dewar K."/>
            <person name="Dunn P."/>
            <person name="Etgu P."/>
            <person name="Feldblyum T.V."/>
            <person name="Feng J.-D."/>
            <person name="Fong B."/>
            <person name="Fujii C.Y."/>
            <person name="Gill J.E."/>
            <person name="Goldsmith A.D."/>
            <person name="Haas B."/>
            <person name="Hansen N.F."/>
            <person name="Hughes B."/>
            <person name="Huizar L."/>
            <person name="Hunter J.L."/>
            <person name="Jenkins J."/>
            <person name="Johnson-Hopson C."/>
            <person name="Khan S."/>
            <person name="Khaykin E."/>
            <person name="Kim C.J."/>
            <person name="Koo H.L."/>
            <person name="Kremenetskaia I."/>
            <person name="Kurtz D.B."/>
            <person name="Kwan A."/>
            <person name="Lam B."/>
            <person name="Langin-Hooper S."/>
            <person name="Lee A."/>
            <person name="Lee J.M."/>
            <person name="Lenz C.A."/>
            <person name="Li J.H."/>
            <person name="Li Y.-P."/>
            <person name="Lin X."/>
            <person name="Liu S.X."/>
            <person name="Liu Z.A."/>
            <person name="Luros J.S."/>
            <person name="Maiti R."/>
            <person name="Marziali A."/>
            <person name="Militscher J."/>
            <person name="Miranda M."/>
            <person name="Nguyen M."/>
            <person name="Nierman W.C."/>
            <person name="Osborne B.I."/>
            <person name="Pai G."/>
            <person name="Peterson J."/>
            <person name="Pham P.K."/>
            <person name="Rizzo M."/>
            <person name="Rooney T."/>
            <person name="Rowley D."/>
            <person name="Sakano H."/>
            <person name="Salzberg S.L."/>
            <person name="Schwartz J.R."/>
            <person name="Shinn P."/>
            <person name="Southwick A.M."/>
            <person name="Sun H."/>
            <person name="Tallon L.J."/>
            <person name="Tambunga G."/>
            <person name="Toriumi M.J."/>
            <person name="Town C.D."/>
            <person name="Utterback T."/>
            <person name="Van Aken S."/>
            <person name="Vaysberg M."/>
            <person name="Vysotskaia V.S."/>
            <person name="Walker M."/>
            <person name="Wu D."/>
            <person name="Yu G."/>
            <person name="Fraser C.M."/>
            <person name="Venter J.C."/>
            <person name="Davis R.W."/>
        </authorList>
    </citation>
    <scope>NUCLEOTIDE SEQUENCE [LARGE SCALE GENOMIC DNA]</scope>
    <source>
        <strain>cv. Columbia</strain>
    </source>
</reference>
<reference key="2">
    <citation type="journal article" date="2017" name="Plant J.">
        <title>Araport11: a complete reannotation of the Arabidopsis thaliana reference genome.</title>
        <authorList>
            <person name="Cheng C.Y."/>
            <person name="Krishnakumar V."/>
            <person name="Chan A.P."/>
            <person name="Thibaud-Nissen F."/>
            <person name="Schobel S."/>
            <person name="Town C.D."/>
        </authorList>
    </citation>
    <scope>GENOME REANNOTATION</scope>
    <source>
        <strain>cv. Columbia</strain>
    </source>
</reference>
<reference key="3">
    <citation type="submission" date="2002-03" db="EMBL/GenBank/DDBJ databases">
        <title>Full-length cDNA from Arabidopsis thaliana.</title>
        <authorList>
            <person name="Brover V.V."/>
            <person name="Troukhan M.E."/>
            <person name="Alexandrov N.A."/>
            <person name="Lu Y.-P."/>
            <person name="Flavell R.B."/>
            <person name="Feldmann K.A."/>
        </authorList>
    </citation>
    <scope>NUCLEOTIDE SEQUENCE [LARGE SCALE MRNA]</scope>
</reference>
<reference key="4">
    <citation type="submission" date="2006-04" db="EMBL/GenBank/DDBJ databases">
        <title>Arabidopsis ORF clones.</title>
        <authorList>
            <person name="Shinn P."/>
            <person name="Chen H."/>
            <person name="Kim C.J."/>
            <person name="Quinitio C."/>
            <person name="Ecker J.R."/>
        </authorList>
    </citation>
    <scope>NUCLEOTIDE SEQUENCE [LARGE SCALE MRNA]</scope>
    <source>
        <strain>cv. Columbia</strain>
    </source>
</reference>
<reference key="5">
    <citation type="journal article" date="2006" name="Plant Physiol.">
        <title>NUCLEAR FUSION DEFECTIVE1 encodes the Arabidopsis RPL21M protein and is required for karyogamy during female gametophyte development and fertilization.</title>
        <authorList>
            <person name="Portereiko M.F."/>
            <person name="Sandaklie-Nikolova L."/>
            <person name="Lloyd A."/>
            <person name="Dever C.A."/>
            <person name="Otsuga D."/>
            <person name="Drews G.N."/>
        </authorList>
    </citation>
    <scope>FUNCTION</scope>
    <scope>DISRUPTION PHENOTYPE</scope>
    <source>
        <strain>cv. Columbia</strain>
    </source>
</reference>
<reference key="6">
    <citation type="journal article" date="2023" name="Plant Cell">
        <title>An updated nomenclature for plant ribosomal protein genes.</title>
        <authorList>
            <person name="Scarpin M.R."/>
            <person name="Busche M."/>
            <person name="Martinez R.E."/>
            <person name="Harper L.C."/>
            <person name="Reiser L."/>
            <person name="Szakonyi D."/>
            <person name="Merchante C."/>
            <person name="Lan T."/>
            <person name="Xiong W."/>
            <person name="Mo B."/>
            <person name="Tang G."/>
            <person name="Chen X."/>
            <person name="Bailey-Serres J."/>
            <person name="Browning K.S."/>
            <person name="Brunkard J.O."/>
        </authorList>
    </citation>
    <scope>NOMENCLATURE</scope>
</reference>
<gene>
    <name evidence="4" type="primary">NFD5</name>
    <name evidence="7" type="ordered locus">At1g19520</name>
    <name evidence="8" type="ORF">F18O14.40</name>
</gene>
<proteinExistence type="evidence at transcript level"/>
<keyword id="KW-0025">Alternative splicing</keyword>
<keyword id="KW-0217">Developmental protein</keyword>
<keyword id="KW-0415">Karyogamy</keyword>
<keyword id="KW-0496">Mitochondrion</keyword>
<keyword id="KW-1185">Reference proteome</keyword>
<keyword id="KW-0687">Ribonucleoprotein</keyword>
<keyword id="KW-0689">Ribosomal protein</keyword>
<keyword id="KW-0809">Transit peptide</keyword>
<protein>
    <recommendedName>
        <fullName evidence="5">Small ribosomal subunit protein mS77 (rPPR2)</fullName>
    </recommendedName>
    <alternativeName>
        <fullName evidence="4">Protein NUCLEAR FUSION DEFECTIVE 5, mitochondrial</fullName>
    </alternativeName>
</protein>
<evidence type="ECO:0000255" key="1"/>
<evidence type="ECO:0000256" key="2">
    <source>
        <dbReference type="SAM" id="MobiDB-lite"/>
    </source>
</evidence>
<evidence type="ECO:0000269" key="3">
    <source>
    </source>
</evidence>
<evidence type="ECO:0000303" key="4">
    <source>
    </source>
</evidence>
<evidence type="ECO:0000303" key="5">
    <source>
    </source>
</evidence>
<evidence type="ECO:0000305" key="6"/>
<evidence type="ECO:0000312" key="7">
    <source>
        <dbReference type="Araport" id="AT1G19520"/>
    </source>
</evidence>
<evidence type="ECO:0000312" key="8">
    <source>
        <dbReference type="EMBL" id="AAF79432.1"/>
    </source>
</evidence>